<feature type="chain" id="PRO_1000068534" description="Enterobactin exporter EntS">
    <location>
        <begin position="1"/>
        <end position="416"/>
    </location>
</feature>
<feature type="topological domain" description="Cytoplasmic" evidence="1">
    <location>
        <begin position="1"/>
        <end position="21"/>
    </location>
</feature>
<feature type="transmembrane region" description="Helical" evidence="1">
    <location>
        <begin position="22"/>
        <end position="42"/>
    </location>
</feature>
<feature type="topological domain" description="Periplasmic" evidence="1">
    <location>
        <begin position="43"/>
        <end position="55"/>
    </location>
</feature>
<feature type="transmembrane region" description="Helical" evidence="1">
    <location>
        <begin position="56"/>
        <end position="76"/>
    </location>
</feature>
<feature type="topological domain" description="Cytoplasmic" evidence="1">
    <location>
        <begin position="77"/>
        <end position="83"/>
    </location>
</feature>
<feature type="transmembrane region" description="Helical" evidence="1">
    <location>
        <begin position="84"/>
        <end position="104"/>
    </location>
</feature>
<feature type="topological domain" description="Periplasmic" evidence="1">
    <location>
        <begin position="105"/>
        <end position="109"/>
    </location>
</feature>
<feature type="transmembrane region" description="Helical" evidence="1">
    <location>
        <begin position="110"/>
        <end position="130"/>
    </location>
</feature>
<feature type="topological domain" description="Cytoplasmic" evidence="1">
    <location>
        <begin position="131"/>
        <end position="156"/>
    </location>
</feature>
<feature type="transmembrane region" description="Helical" evidence="1">
    <location>
        <begin position="157"/>
        <end position="177"/>
    </location>
</feature>
<feature type="topological domain" description="Periplasmic" evidence="1">
    <location>
        <position position="178"/>
    </location>
</feature>
<feature type="transmembrane region" description="Helical" evidence="1">
    <location>
        <begin position="179"/>
        <end position="199"/>
    </location>
</feature>
<feature type="topological domain" description="Cytoplasmic" evidence="1">
    <location>
        <begin position="200"/>
        <end position="218"/>
    </location>
</feature>
<feature type="transmembrane region" description="Helical" evidence="1">
    <location>
        <begin position="219"/>
        <end position="239"/>
    </location>
</feature>
<feature type="topological domain" description="Periplasmic" evidence="1">
    <location>
        <begin position="240"/>
        <end position="256"/>
    </location>
</feature>
<feature type="transmembrane region" description="Helical" evidence="1">
    <location>
        <begin position="257"/>
        <end position="277"/>
    </location>
</feature>
<feature type="topological domain" description="Cytoplasmic" evidence="1">
    <location>
        <begin position="278"/>
        <end position="287"/>
    </location>
</feature>
<feature type="transmembrane region" description="Helical" evidence="1">
    <location>
        <begin position="288"/>
        <end position="307"/>
    </location>
</feature>
<feature type="topological domain" description="Periplasmic" evidence="1">
    <location>
        <begin position="308"/>
        <end position="313"/>
    </location>
</feature>
<feature type="transmembrane region" description="Helical" evidence="1">
    <location>
        <begin position="314"/>
        <end position="336"/>
    </location>
</feature>
<feature type="topological domain" description="Cytoplasmic" evidence="1">
    <location>
        <begin position="337"/>
        <end position="356"/>
    </location>
</feature>
<feature type="transmembrane region" description="Helical" evidence="1">
    <location>
        <begin position="357"/>
        <end position="377"/>
    </location>
</feature>
<feature type="topological domain" description="Periplasmic" evidence="1">
    <location>
        <position position="378"/>
    </location>
</feature>
<feature type="transmembrane region" description="Helical" evidence="1">
    <location>
        <begin position="379"/>
        <end position="399"/>
    </location>
</feature>
<feature type="topological domain" description="Cytoplasmic" evidence="1">
    <location>
        <begin position="400"/>
        <end position="416"/>
    </location>
</feature>
<sequence>MNKQSWLLNLSLLKTHPAFRAVFLARFISIVSLGLLGVAVPVQIQMMTHSTWQVGLSVTLTGGAMFVGLMVGGVLADRYERKKVILLARGTCGIGFIGLCLNALLPEPSLLAIYLLGLWDGFFASLGVTALLAATPALVGRENLMQAGAITMLTVRLGSVISPMIGGLLLATGGVAWNYGLAAAGTFITLLPLLSLPALPPPPQPREHPLKSLLAGFRFLLASPLVGGIALLGGLLTMASAVRVLYPALADNWQMSAAQIGFLYAAIPLGAAIGALTSGKLAHSARPGLLMLLSTLGSFLAIGLFGLMPMWILGVVCLALFGWLSAVSSLLQYTMLQTQTPEAMLGRINGLWTAQNVTGDAIGAALLGGLGAMMTPVASASASGFGLLIIGVLLLLVLVELRRFRQTPPQVTASDS</sequence>
<dbReference type="EMBL" id="CP000800">
    <property type="protein sequence ID" value="ABV19129.1"/>
    <property type="molecule type" value="Genomic_DNA"/>
</dbReference>
<dbReference type="RefSeq" id="WP_001041789.1">
    <property type="nucleotide sequence ID" value="NC_009801.1"/>
</dbReference>
<dbReference type="SMR" id="A7ZIX5"/>
<dbReference type="GeneID" id="93776895"/>
<dbReference type="KEGG" id="ecw:EcE24377A_0611"/>
<dbReference type="HOGENOM" id="CLU_034180_11_0_6"/>
<dbReference type="Proteomes" id="UP000001122">
    <property type="component" value="Chromosome"/>
</dbReference>
<dbReference type="GO" id="GO:0005886">
    <property type="term" value="C:plasma membrane"/>
    <property type="evidence" value="ECO:0007669"/>
    <property type="project" value="UniProtKB-SubCell"/>
</dbReference>
<dbReference type="GO" id="GO:0042931">
    <property type="term" value="F:enterobactin transmembrane transporter activity"/>
    <property type="evidence" value="ECO:0007669"/>
    <property type="project" value="InterPro"/>
</dbReference>
<dbReference type="CDD" id="cd06173">
    <property type="entry name" value="MFS_MefA_like"/>
    <property type="match status" value="1"/>
</dbReference>
<dbReference type="FunFam" id="1.20.1250.20:FF:000056">
    <property type="entry name" value="Enterobactin exporter EntS"/>
    <property type="match status" value="1"/>
</dbReference>
<dbReference type="Gene3D" id="1.20.1250.20">
    <property type="entry name" value="MFS general substrate transporter like domains"/>
    <property type="match status" value="1"/>
</dbReference>
<dbReference type="HAMAP" id="MF_01436">
    <property type="entry name" value="MFS_EntS"/>
    <property type="match status" value="1"/>
</dbReference>
<dbReference type="InterPro" id="IPR023722">
    <property type="entry name" value="Enterobactin_exp_EntS"/>
</dbReference>
<dbReference type="InterPro" id="IPR020846">
    <property type="entry name" value="MFS_dom"/>
</dbReference>
<dbReference type="InterPro" id="IPR036259">
    <property type="entry name" value="MFS_trans_sf"/>
</dbReference>
<dbReference type="InterPro" id="IPR010290">
    <property type="entry name" value="TM_effector"/>
</dbReference>
<dbReference type="NCBIfam" id="NF007792">
    <property type="entry name" value="PRK10489.1"/>
    <property type="match status" value="1"/>
</dbReference>
<dbReference type="PANTHER" id="PTHR23513:SF9">
    <property type="entry name" value="ENTEROBACTIN EXPORTER ENTS"/>
    <property type="match status" value="1"/>
</dbReference>
<dbReference type="PANTHER" id="PTHR23513">
    <property type="entry name" value="INTEGRAL MEMBRANE EFFLUX PROTEIN-RELATED"/>
    <property type="match status" value="1"/>
</dbReference>
<dbReference type="Pfam" id="PF05977">
    <property type="entry name" value="MFS_3"/>
    <property type="match status" value="1"/>
</dbReference>
<dbReference type="SUPFAM" id="SSF103473">
    <property type="entry name" value="MFS general substrate transporter"/>
    <property type="match status" value="1"/>
</dbReference>
<dbReference type="PROSITE" id="PS50850">
    <property type="entry name" value="MFS"/>
    <property type="match status" value="1"/>
</dbReference>
<evidence type="ECO:0000255" key="1">
    <source>
        <dbReference type="HAMAP-Rule" id="MF_01436"/>
    </source>
</evidence>
<organism>
    <name type="scientific">Escherichia coli O139:H28 (strain E24377A / ETEC)</name>
    <dbReference type="NCBI Taxonomy" id="331111"/>
    <lineage>
        <taxon>Bacteria</taxon>
        <taxon>Pseudomonadati</taxon>
        <taxon>Pseudomonadota</taxon>
        <taxon>Gammaproteobacteria</taxon>
        <taxon>Enterobacterales</taxon>
        <taxon>Enterobacteriaceae</taxon>
        <taxon>Escherichia</taxon>
    </lineage>
</organism>
<accession>A7ZIX5</accession>
<gene>
    <name evidence="1" type="primary">entS</name>
    <name type="ordered locus">EcE24377A_0611</name>
</gene>
<proteinExistence type="inferred from homology"/>
<name>ENTS_ECO24</name>
<reference key="1">
    <citation type="journal article" date="2008" name="J. Bacteriol.">
        <title>The pangenome structure of Escherichia coli: comparative genomic analysis of E. coli commensal and pathogenic isolates.</title>
        <authorList>
            <person name="Rasko D.A."/>
            <person name="Rosovitz M.J."/>
            <person name="Myers G.S.A."/>
            <person name="Mongodin E.F."/>
            <person name="Fricke W.F."/>
            <person name="Gajer P."/>
            <person name="Crabtree J."/>
            <person name="Sebaihia M."/>
            <person name="Thomson N.R."/>
            <person name="Chaudhuri R."/>
            <person name="Henderson I.R."/>
            <person name="Sperandio V."/>
            <person name="Ravel J."/>
        </authorList>
    </citation>
    <scope>NUCLEOTIDE SEQUENCE [LARGE SCALE GENOMIC DNA]</scope>
    <source>
        <strain>E24377A / ETEC</strain>
    </source>
</reference>
<keyword id="KW-0997">Cell inner membrane</keyword>
<keyword id="KW-1003">Cell membrane</keyword>
<keyword id="KW-0472">Membrane</keyword>
<keyword id="KW-1185">Reference proteome</keyword>
<keyword id="KW-0812">Transmembrane</keyword>
<keyword id="KW-1133">Transmembrane helix</keyword>
<keyword id="KW-0813">Transport</keyword>
<comment type="function">
    <text evidence="1">Component of an export pathway for enterobactin.</text>
</comment>
<comment type="subcellular location">
    <subcellularLocation>
        <location evidence="1">Cell inner membrane</location>
        <topology evidence="1">Multi-pass membrane protein</topology>
    </subcellularLocation>
</comment>
<comment type="similarity">
    <text evidence="1">Belongs to the major facilitator superfamily. EntS (TC 2.A.1.38) family.</text>
</comment>
<protein>
    <recommendedName>
        <fullName evidence="1">Enterobactin exporter EntS</fullName>
    </recommendedName>
</protein>